<organism>
    <name type="scientific">Streptococcus uberis (strain ATCC BAA-854 / 0140J)</name>
    <dbReference type="NCBI Taxonomy" id="218495"/>
    <lineage>
        <taxon>Bacteria</taxon>
        <taxon>Bacillati</taxon>
        <taxon>Bacillota</taxon>
        <taxon>Bacilli</taxon>
        <taxon>Lactobacillales</taxon>
        <taxon>Streptococcaceae</taxon>
        <taxon>Streptococcus</taxon>
    </lineage>
</organism>
<gene>
    <name evidence="1" type="primary">sepF</name>
    <name type="ordered locus">SUB1288</name>
</gene>
<evidence type="ECO:0000255" key="1">
    <source>
        <dbReference type="HAMAP-Rule" id="MF_01197"/>
    </source>
</evidence>
<evidence type="ECO:0000256" key="2">
    <source>
        <dbReference type="SAM" id="MobiDB-lite"/>
    </source>
</evidence>
<accession>B9DUV1</accession>
<protein>
    <recommendedName>
        <fullName evidence="1">Cell division protein SepF</fullName>
    </recommendedName>
</protein>
<comment type="function">
    <text evidence="1">Cell division protein that is part of the divisome complex and is recruited early to the Z-ring. Probably stimulates Z-ring formation, perhaps through the cross-linking of FtsZ protofilaments. Its function overlaps with FtsA.</text>
</comment>
<comment type="subunit">
    <text evidence="1">Homodimer. Interacts with FtsZ.</text>
</comment>
<comment type="subcellular location">
    <subcellularLocation>
        <location evidence="1">Cytoplasm</location>
    </subcellularLocation>
    <text evidence="1">Localizes to the division site, in a FtsZ-dependent manner.</text>
</comment>
<comment type="similarity">
    <text evidence="1">Belongs to the SepF family.</text>
</comment>
<keyword id="KW-0131">Cell cycle</keyword>
<keyword id="KW-0132">Cell division</keyword>
<keyword id="KW-0963">Cytoplasm</keyword>
<keyword id="KW-1185">Reference proteome</keyword>
<keyword id="KW-0717">Septation</keyword>
<name>SEPF_STRU0</name>
<sequence>MAFKDAINKMVSYFDTDEVNEVEEEVTAAKMEEPVVQEPKQRPIPSQQTSRQSQNPAMNRPTVARSQQTESDSLPTYPNRQESIDRRSSGRESVTASTARRETYQAQTTVQEGKTTIALKYPKKYEDAQEIVDLLIGNECVLIDFQFMLDAQARRCLDFIDGASKVLYGTLQKVGSSMYLLTPSNVSVNIEDMNIPNHNQDFGYDFDMKRR</sequence>
<reference key="1">
    <citation type="journal article" date="2009" name="BMC Genomics">
        <title>Evidence for niche adaptation in the genome of the bovine pathogen Streptococcus uberis.</title>
        <authorList>
            <person name="Ward P.N."/>
            <person name="Holden M.T.G."/>
            <person name="Leigh J.A."/>
            <person name="Lennard N."/>
            <person name="Bignell A."/>
            <person name="Barron A."/>
            <person name="Clark L."/>
            <person name="Quail M.A."/>
            <person name="Woodward J."/>
            <person name="Barrell B.G."/>
            <person name="Egan S.A."/>
            <person name="Field T.R."/>
            <person name="Maskell D."/>
            <person name="Kehoe M."/>
            <person name="Dowson C.G."/>
            <person name="Chanter N."/>
            <person name="Whatmore A.M."/>
            <person name="Bentley S.D."/>
            <person name="Parkhill J."/>
        </authorList>
    </citation>
    <scope>NUCLEOTIDE SEQUENCE [LARGE SCALE GENOMIC DNA]</scope>
    <source>
        <strain>ATCC BAA-854 / 0140J</strain>
    </source>
</reference>
<dbReference type="EMBL" id="AM946015">
    <property type="protein sequence ID" value="CAR42807.1"/>
    <property type="molecule type" value="Genomic_DNA"/>
</dbReference>
<dbReference type="RefSeq" id="WP_012658762.1">
    <property type="nucleotide sequence ID" value="NC_012004.1"/>
</dbReference>
<dbReference type="SMR" id="B9DUV1"/>
<dbReference type="STRING" id="218495.SUB1288"/>
<dbReference type="GeneID" id="93826558"/>
<dbReference type="KEGG" id="sub:SUB1288"/>
<dbReference type="eggNOG" id="COG1799">
    <property type="taxonomic scope" value="Bacteria"/>
</dbReference>
<dbReference type="HOGENOM" id="CLU_078499_2_0_9"/>
<dbReference type="OrthoDB" id="9815206at2"/>
<dbReference type="Proteomes" id="UP000000449">
    <property type="component" value="Chromosome"/>
</dbReference>
<dbReference type="GO" id="GO:0005737">
    <property type="term" value="C:cytoplasm"/>
    <property type="evidence" value="ECO:0007669"/>
    <property type="project" value="UniProtKB-SubCell"/>
</dbReference>
<dbReference type="GO" id="GO:0000917">
    <property type="term" value="P:division septum assembly"/>
    <property type="evidence" value="ECO:0007669"/>
    <property type="project" value="UniProtKB-KW"/>
</dbReference>
<dbReference type="GO" id="GO:0043093">
    <property type="term" value="P:FtsZ-dependent cytokinesis"/>
    <property type="evidence" value="ECO:0007669"/>
    <property type="project" value="UniProtKB-UniRule"/>
</dbReference>
<dbReference type="Gene3D" id="3.30.110.150">
    <property type="entry name" value="SepF-like protein"/>
    <property type="match status" value="1"/>
</dbReference>
<dbReference type="HAMAP" id="MF_01197">
    <property type="entry name" value="SepF"/>
    <property type="match status" value="1"/>
</dbReference>
<dbReference type="InterPro" id="IPR023052">
    <property type="entry name" value="Cell_div_SepF"/>
</dbReference>
<dbReference type="InterPro" id="IPR007561">
    <property type="entry name" value="Cell_div_SepF/SepF-rel"/>
</dbReference>
<dbReference type="InterPro" id="IPR038594">
    <property type="entry name" value="SepF-like_sf"/>
</dbReference>
<dbReference type="PANTHER" id="PTHR35798">
    <property type="entry name" value="CELL DIVISION PROTEIN SEPF"/>
    <property type="match status" value="1"/>
</dbReference>
<dbReference type="PANTHER" id="PTHR35798:SF1">
    <property type="entry name" value="CELL DIVISION PROTEIN SEPF"/>
    <property type="match status" value="1"/>
</dbReference>
<dbReference type="Pfam" id="PF04472">
    <property type="entry name" value="SepF"/>
    <property type="match status" value="1"/>
</dbReference>
<proteinExistence type="inferred from homology"/>
<feature type="chain" id="PRO_1000164545" description="Cell division protein SepF">
    <location>
        <begin position="1"/>
        <end position="211"/>
    </location>
</feature>
<feature type="region of interest" description="Disordered" evidence="2">
    <location>
        <begin position="15"/>
        <end position="111"/>
    </location>
</feature>
<feature type="compositionally biased region" description="Acidic residues" evidence="2">
    <location>
        <begin position="15"/>
        <end position="26"/>
    </location>
</feature>
<feature type="compositionally biased region" description="Polar residues" evidence="2">
    <location>
        <begin position="44"/>
        <end position="57"/>
    </location>
</feature>
<feature type="compositionally biased region" description="Polar residues" evidence="2">
    <location>
        <begin position="64"/>
        <end position="81"/>
    </location>
</feature>
<feature type="compositionally biased region" description="Polar residues" evidence="2">
    <location>
        <begin position="91"/>
        <end position="111"/>
    </location>
</feature>